<organism>
    <name type="scientific">Bovine papillomavirus type 5</name>
    <dbReference type="NCBI Taxonomy" id="2491661"/>
    <lineage>
        <taxon>Viruses</taxon>
        <taxon>Monodnaviria</taxon>
        <taxon>Shotokuvirae</taxon>
        <taxon>Cossaviricota</taxon>
        <taxon>Papovaviricetes</taxon>
        <taxon>Zurhausenvirales</taxon>
        <taxon>Papillomaviridae</taxon>
        <taxon>Firstpapillomavirinae</taxon>
        <taxon>Epsilonpapillomavirus</taxon>
        <taxon>Epsilonpapillomavirus 1</taxon>
    </lineage>
</organism>
<proteinExistence type="inferred from homology"/>
<sequence>MAAAERLSAAQETQMTLLEKPSFDLKDHISYYGALRTENTIFYAARKKGLTSLGHCPVPTLATAAANAKAAIEMQLLLKDLLRSPFAKNDWSLNDVSHERYKAPPSDTLKRKPRIVEVIFDKDPQNKTWYTLWDEVYVCTVDGWTLTTSGADATGIFVNMQGSRQYYELFGEDAQRFGTSGTWEVIDQNQRFHFPPSSRADTTDGLPGLQEEPRGGDGPTCSGPAPAIPDSPSRCLSRGFAGRDPGCHRNRHRVHPYILSGGQRILVTSSSSSTVQGPLSSGSSQHSQSRGRPPSPDSTETERARTPVNSDRQRAGEFDLLKGGCRPCCLIEGNGNKVKCLRFRLKKSHRSRFLDITTTFWATGDEGSDRQGNGTILITFTDTTQRDLFLGSVSIPGELSVRRITISTD</sequence>
<accession>Q8BDG4</accession>
<evidence type="ECO:0000255" key="1">
    <source>
        <dbReference type="HAMAP-Rule" id="MF_04001"/>
    </source>
</evidence>
<evidence type="ECO:0000256" key="2">
    <source>
        <dbReference type="SAM" id="MobiDB-lite"/>
    </source>
</evidence>
<gene>
    <name evidence="1" type="primary">E2</name>
</gene>
<keyword id="KW-0010">Activator</keyword>
<keyword id="KW-0235">DNA replication</keyword>
<keyword id="KW-0238">DNA-binding</keyword>
<keyword id="KW-0244">Early protein</keyword>
<keyword id="KW-1048">Host nucleus</keyword>
<keyword id="KW-0597">Phosphoprotein</keyword>
<keyword id="KW-1185">Reference proteome</keyword>
<keyword id="KW-0678">Repressor</keyword>
<keyword id="KW-0804">Transcription</keyword>
<keyword id="KW-0805">Transcription regulation</keyword>
<feature type="chain" id="PRO_0000133176" description="Regulatory protein E2">
    <location>
        <begin position="1"/>
        <end position="409"/>
    </location>
</feature>
<feature type="region of interest" description="Transactivation domain" evidence="1">
    <location>
        <begin position="1"/>
        <end position="199"/>
    </location>
</feature>
<feature type="region of interest" description="Disordered" evidence="2">
    <location>
        <begin position="192"/>
        <end position="251"/>
    </location>
</feature>
<feature type="region of interest" description="Disordered" evidence="2">
    <location>
        <begin position="269"/>
        <end position="315"/>
    </location>
</feature>
<feature type="region of interest" description="DNA-binding domain" evidence="1">
    <location>
        <begin position="325"/>
        <end position="409"/>
    </location>
</feature>
<feature type="compositionally biased region" description="Low complexity" evidence="2">
    <location>
        <begin position="276"/>
        <end position="292"/>
    </location>
</feature>
<feature type="compositionally biased region" description="Basic and acidic residues" evidence="2">
    <location>
        <begin position="300"/>
        <end position="315"/>
    </location>
</feature>
<comment type="function">
    <text evidence="1">Plays a role in the initiation of viral DNA replication. A dimer of E2 interacts with a dimer of E1 in order to improve specificity of E1 DNA binding activity. Once the complex recognizes and binds DNA at specific sites, the E2 dimer is removed from DNA. E2 also regulates viral transcription through binding to the E2RE response element (5'-ACCNNNNNNGGT-3') present in multiple copies in the regulatory regions of the viral genome. Activates or represses transcription depending on E2RE's position with regards to proximal promoter elements including the TATA-box. Repression occurs by sterically hindering the assembly of the transcription initiation complex.</text>
</comment>
<comment type="subunit">
    <text evidence="1">Binds DNA as homodimer. Interacts with protein E1; this interaction greatly increases E1 DNA-binding activity. Interacts with protein L1; this interaction enhances E2-dependent replication and transcription activation. Interacts with protein L2; this interaction inhibits E2 transcriptional activity but not DNA replication function E2. Interacts with protein E7; this interaction inhibits E7 oncogenic activity. Interacts with host TAF1; this interaction modulates E2-dependent transcriptional regulation. Interacts with host BRD4; this interaction mediates E2 transcriptional activation function. Additionally, the interaction with host BRD4 on mitotic chromosomes mediates tethering of the viral genome. Interacts with host TOPBP1; this interaction is required for optimal viral DNA replication.</text>
</comment>
<comment type="subcellular location">
    <subcellularLocation>
        <location evidence="1">Host nucleus</location>
    </subcellularLocation>
</comment>
<comment type="PTM">
    <text evidence="1">Phosphorylated.</text>
</comment>
<comment type="similarity">
    <text evidence="1">Belongs to the papillomaviridae E2 protein family.</text>
</comment>
<dbReference type="EMBL" id="AF457465">
    <property type="protein sequence ID" value="AAN09927.1"/>
    <property type="molecule type" value="Genomic_DNA"/>
</dbReference>
<dbReference type="EMBL" id="AJ620206">
    <property type="protein sequence ID" value="CAF05674.1"/>
    <property type="molecule type" value="Genomic_DNA"/>
</dbReference>
<dbReference type="RefSeq" id="NP_694433.1">
    <property type="nucleotide sequence ID" value="NC_004195.1"/>
</dbReference>
<dbReference type="SMR" id="Q8BDG4"/>
<dbReference type="GeneID" id="955404"/>
<dbReference type="KEGG" id="vg:955404"/>
<dbReference type="Proteomes" id="UP000008785">
    <property type="component" value="Genome"/>
</dbReference>
<dbReference type="Proteomes" id="UP000185273">
    <property type="component" value="Genome"/>
</dbReference>
<dbReference type="GO" id="GO:0042025">
    <property type="term" value="C:host cell nucleus"/>
    <property type="evidence" value="ECO:0007669"/>
    <property type="project" value="UniProtKB-SubCell"/>
</dbReference>
<dbReference type="GO" id="GO:0003677">
    <property type="term" value="F:DNA binding"/>
    <property type="evidence" value="ECO:0007669"/>
    <property type="project" value="UniProtKB-UniRule"/>
</dbReference>
<dbReference type="GO" id="GO:0003700">
    <property type="term" value="F:DNA-binding transcription factor activity"/>
    <property type="evidence" value="ECO:0007669"/>
    <property type="project" value="UniProtKB-UniRule"/>
</dbReference>
<dbReference type="GO" id="GO:0000166">
    <property type="term" value="F:nucleotide binding"/>
    <property type="evidence" value="ECO:0007669"/>
    <property type="project" value="UniProtKB-UniRule"/>
</dbReference>
<dbReference type="GO" id="GO:0006260">
    <property type="term" value="P:DNA replication"/>
    <property type="evidence" value="ECO:0007669"/>
    <property type="project" value="UniProtKB-KW"/>
</dbReference>
<dbReference type="GO" id="GO:0006351">
    <property type="term" value="P:DNA-templated transcription"/>
    <property type="evidence" value="ECO:0007669"/>
    <property type="project" value="UniProtKB-UniRule"/>
</dbReference>
<dbReference type="GO" id="GO:0006275">
    <property type="term" value="P:regulation of DNA replication"/>
    <property type="evidence" value="ECO:0007669"/>
    <property type="project" value="UniProtKB-UniRule"/>
</dbReference>
<dbReference type="GO" id="GO:0039693">
    <property type="term" value="P:viral DNA genome replication"/>
    <property type="evidence" value="ECO:0007669"/>
    <property type="project" value="UniProtKB-UniRule"/>
</dbReference>
<dbReference type="Gene3D" id="3.30.70.330">
    <property type="match status" value="1"/>
</dbReference>
<dbReference type="Gene3D" id="1.10.287.30">
    <property type="entry name" value="E2 (early) protein, N terminal domain, subdomain 1"/>
    <property type="match status" value="1"/>
</dbReference>
<dbReference type="Gene3D" id="2.170.200.10">
    <property type="entry name" value="Papillomavirus E2 early protein domain"/>
    <property type="match status" value="1"/>
</dbReference>
<dbReference type="HAMAP" id="MF_04001">
    <property type="entry name" value="PPV_E2"/>
    <property type="match status" value="1"/>
</dbReference>
<dbReference type="InterPro" id="IPR035975">
    <property type="entry name" value="E2/EBNA1_C_sf"/>
</dbReference>
<dbReference type="InterPro" id="IPR012677">
    <property type="entry name" value="Nucleotide-bd_a/b_plait_sf"/>
</dbReference>
<dbReference type="InterPro" id="IPR000427">
    <property type="entry name" value="Papillomavirus_E2_C"/>
</dbReference>
<dbReference type="InterPro" id="IPR001866">
    <property type="entry name" value="PPV_E2_N"/>
</dbReference>
<dbReference type="InterPro" id="IPR033668">
    <property type="entry name" value="Reg_prot_E2"/>
</dbReference>
<dbReference type="InterPro" id="IPR036050">
    <property type="entry name" value="Regulatory_protein_E2_N"/>
</dbReference>
<dbReference type="InterPro" id="IPR042503">
    <property type="entry name" value="Regulatory_protein_E2_N_1"/>
</dbReference>
<dbReference type="InterPro" id="IPR042504">
    <property type="entry name" value="Regulatory_protein_E2_N_2"/>
</dbReference>
<dbReference type="Pfam" id="PF00511">
    <property type="entry name" value="PPV_E2_C"/>
    <property type="match status" value="1"/>
</dbReference>
<dbReference type="Pfam" id="PF00508">
    <property type="entry name" value="PPV_E2_N"/>
    <property type="match status" value="1"/>
</dbReference>
<dbReference type="SUPFAM" id="SSF51332">
    <property type="entry name" value="E2 regulatory, transactivation domain"/>
    <property type="match status" value="1"/>
</dbReference>
<dbReference type="SUPFAM" id="SSF54957">
    <property type="entry name" value="Viral DNA-binding domain"/>
    <property type="match status" value="1"/>
</dbReference>
<name>VE2_BPV5</name>
<protein>
    <recommendedName>
        <fullName evidence="1">Regulatory protein E2</fullName>
    </recommendedName>
</protein>
<organismHost>
    <name type="scientific">Bos taurus</name>
    <name type="common">Bovine</name>
    <dbReference type="NCBI Taxonomy" id="9913"/>
</organismHost>
<reference key="1">
    <citation type="journal article" date="2002" name="J. Virol.">
        <title>Lack of canonical E6 and E7 open reading frames in bird papillomaviruses: Fringilla coelebs papillomavirus and Psittacus erithacus timneh papillomavirus.</title>
        <authorList>
            <person name="Terai M."/>
            <person name="DeSalle R."/>
            <person name="Burk R.D."/>
        </authorList>
    </citation>
    <scope>NUCLEOTIDE SEQUENCE [GENOMIC DNA]</scope>
</reference>
<reference key="2">
    <citation type="submission" date="2004-01" db="EMBL/GenBank/DDBJ databases">
        <title>Sequencing of the complete genomes of BPV 3, BPV 5 and BPV 6.</title>
        <authorList>
            <person name="Delius H."/>
            <person name="de Villiers E.M."/>
        </authorList>
    </citation>
    <scope>NUCLEOTIDE SEQUENCE [GENOMIC DNA]</scope>
</reference>